<keyword id="KW-0687">Ribonucleoprotein</keyword>
<keyword id="KW-0689">Ribosomal protein</keyword>
<dbReference type="EMBL" id="CP000736">
    <property type="protein sequence ID" value="ABR52273.1"/>
    <property type="molecule type" value="Genomic_DNA"/>
</dbReference>
<dbReference type="SMR" id="A6U1F5"/>
<dbReference type="KEGG" id="sah:SaurJH1_1423"/>
<dbReference type="HOGENOM" id="CLU_190949_0_2_9"/>
<dbReference type="GO" id="GO:0005737">
    <property type="term" value="C:cytoplasm"/>
    <property type="evidence" value="ECO:0007669"/>
    <property type="project" value="UniProtKB-ARBA"/>
</dbReference>
<dbReference type="GO" id="GO:1990904">
    <property type="term" value="C:ribonucleoprotein complex"/>
    <property type="evidence" value="ECO:0007669"/>
    <property type="project" value="UniProtKB-KW"/>
</dbReference>
<dbReference type="GO" id="GO:0005840">
    <property type="term" value="C:ribosome"/>
    <property type="evidence" value="ECO:0007669"/>
    <property type="project" value="UniProtKB-KW"/>
</dbReference>
<dbReference type="GO" id="GO:0003735">
    <property type="term" value="F:structural constituent of ribosome"/>
    <property type="evidence" value="ECO:0007669"/>
    <property type="project" value="InterPro"/>
</dbReference>
<dbReference type="GO" id="GO:0006412">
    <property type="term" value="P:translation"/>
    <property type="evidence" value="ECO:0007669"/>
    <property type="project" value="UniProtKB-UniRule"/>
</dbReference>
<dbReference type="Gene3D" id="2.20.28.120">
    <property type="entry name" value="Ribosomal protein L33"/>
    <property type="match status" value="1"/>
</dbReference>
<dbReference type="HAMAP" id="MF_00294">
    <property type="entry name" value="Ribosomal_bL33"/>
    <property type="match status" value="1"/>
</dbReference>
<dbReference type="InterPro" id="IPR001705">
    <property type="entry name" value="Ribosomal_bL33"/>
</dbReference>
<dbReference type="InterPro" id="IPR018264">
    <property type="entry name" value="Ribosomal_bL33_CS"/>
</dbReference>
<dbReference type="InterPro" id="IPR038584">
    <property type="entry name" value="Ribosomal_bL33_sf"/>
</dbReference>
<dbReference type="InterPro" id="IPR011332">
    <property type="entry name" value="Ribosomal_zn-bd"/>
</dbReference>
<dbReference type="NCBIfam" id="NF001764">
    <property type="entry name" value="PRK00504.1"/>
    <property type="match status" value="1"/>
</dbReference>
<dbReference type="NCBIfam" id="NF001860">
    <property type="entry name" value="PRK00595.1"/>
    <property type="match status" value="1"/>
</dbReference>
<dbReference type="NCBIfam" id="TIGR01023">
    <property type="entry name" value="rpmG_bact"/>
    <property type="match status" value="1"/>
</dbReference>
<dbReference type="PANTHER" id="PTHR43168">
    <property type="entry name" value="50S RIBOSOMAL PROTEIN L33, CHLOROPLASTIC"/>
    <property type="match status" value="1"/>
</dbReference>
<dbReference type="PANTHER" id="PTHR43168:SF2">
    <property type="entry name" value="LARGE RIBOSOMAL SUBUNIT PROTEIN BL33C"/>
    <property type="match status" value="1"/>
</dbReference>
<dbReference type="Pfam" id="PF00471">
    <property type="entry name" value="Ribosomal_L33"/>
    <property type="match status" value="1"/>
</dbReference>
<dbReference type="SUPFAM" id="SSF57829">
    <property type="entry name" value="Zn-binding ribosomal proteins"/>
    <property type="match status" value="1"/>
</dbReference>
<dbReference type="PROSITE" id="PS00582">
    <property type="entry name" value="RIBOSOMAL_L33"/>
    <property type="match status" value="1"/>
</dbReference>
<sequence>MRVNVTLACTECGDRNYITTKNKRNNPERIEMKKYCPRLNKYTLHRETK</sequence>
<evidence type="ECO:0000255" key="1">
    <source>
        <dbReference type="HAMAP-Rule" id="MF_00294"/>
    </source>
</evidence>
<organism>
    <name type="scientific">Staphylococcus aureus (strain JH1)</name>
    <dbReference type="NCBI Taxonomy" id="359787"/>
    <lineage>
        <taxon>Bacteria</taxon>
        <taxon>Bacillati</taxon>
        <taxon>Bacillota</taxon>
        <taxon>Bacilli</taxon>
        <taxon>Bacillales</taxon>
        <taxon>Staphylococcaceae</taxon>
        <taxon>Staphylococcus</taxon>
    </lineage>
</organism>
<protein>
    <recommendedName>
        <fullName evidence="1">Large ribosomal subunit protein bL33B</fullName>
    </recommendedName>
    <alternativeName>
        <fullName evidence="1">50S ribosomal protein L33 2</fullName>
    </alternativeName>
</protein>
<proteinExistence type="inferred from homology"/>
<name>RL332_STAA2</name>
<feature type="chain" id="PRO_0000356682" description="Large ribosomal subunit protein bL33B">
    <location>
        <begin position="1"/>
        <end position="49"/>
    </location>
</feature>
<accession>A6U1F5</accession>
<comment type="similarity">
    <text evidence="1">Belongs to the bacterial ribosomal protein bL33 family.</text>
</comment>
<gene>
    <name evidence="1" type="primary">rpmG2</name>
    <name type="ordered locus">SaurJH1_1423</name>
</gene>
<reference key="1">
    <citation type="submission" date="2007-06" db="EMBL/GenBank/DDBJ databases">
        <title>Complete sequence of chromosome of Staphylococcus aureus subsp. aureus JH1.</title>
        <authorList>
            <consortium name="US DOE Joint Genome Institute"/>
            <person name="Copeland A."/>
            <person name="Lucas S."/>
            <person name="Lapidus A."/>
            <person name="Barry K."/>
            <person name="Detter J.C."/>
            <person name="Glavina del Rio T."/>
            <person name="Hammon N."/>
            <person name="Israni S."/>
            <person name="Dalin E."/>
            <person name="Tice H."/>
            <person name="Pitluck S."/>
            <person name="Chain P."/>
            <person name="Malfatti S."/>
            <person name="Shin M."/>
            <person name="Vergez L."/>
            <person name="Schmutz J."/>
            <person name="Larimer F."/>
            <person name="Land M."/>
            <person name="Hauser L."/>
            <person name="Kyrpides N."/>
            <person name="Ivanova N."/>
            <person name="Tomasz A."/>
            <person name="Richardson P."/>
        </authorList>
    </citation>
    <scope>NUCLEOTIDE SEQUENCE [LARGE SCALE GENOMIC DNA]</scope>
    <source>
        <strain>JH1</strain>
    </source>
</reference>